<accession>C3MUV8</accession>
<gene>
    <name evidence="1" type="primary">rpo6</name>
    <name evidence="1" type="synonym">rpoK</name>
    <name type="ordered locus">M1425_1314</name>
</gene>
<sequence>MGLERDGILSQDLHFNEVFVSLWQNKLTRYEIARVISARALQLAMGAPALIDINNISLTDVISIAEEEFKRGVLPITIRRRLPNGKIILLSLRKS</sequence>
<dbReference type="EC" id="2.7.7.6" evidence="1"/>
<dbReference type="EMBL" id="CP001400">
    <property type="protein sequence ID" value="ACP38068.1"/>
    <property type="molecule type" value="Genomic_DNA"/>
</dbReference>
<dbReference type="RefSeq" id="WP_012711319.1">
    <property type="nucleotide sequence ID" value="NC_012588.1"/>
</dbReference>
<dbReference type="SMR" id="C3MUV8"/>
<dbReference type="KEGG" id="sia:M1425_1314"/>
<dbReference type="HOGENOM" id="CLU_112527_4_0_2"/>
<dbReference type="Proteomes" id="UP000001350">
    <property type="component" value="Chromosome"/>
</dbReference>
<dbReference type="GO" id="GO:0005737">
    <property type="term" value="C:cytoplasm"/>
    <property type="evidence" value="ECO:0007669"/>
    <property type="project" value="UniProtKB-SubCell"/>
</dbReference>
<dbReference type="GO" id="GO:0000428">
    <property type="term" value="C:DNA-directed RNA polymerase complex"/>
    <property type="evidence" value="ECO:0007669"/>
    <property type="project" value="UniProtKB-KW"/>
</dbReference>
<dbReference type="GO" id="GO:0003677">
    <property type="term" value="F:DNA binding"/>
    <property type="evidence" value="ECO:0007669"/>
    <property type="project" value="UniProtKB-UniRule"/>
</dbReference>
<dbReference type="GO" id="GO:0003899">
    <property type="term" value="F:DNA-directed RNA polymerase activity"/>
    <property type="evidence" value="ECO:0007669"/>
    <property type="project" value="UniProtKB-UniRule"/>
</dbReference>
<dbReference type="GO" id="GO:0006360">
    <property type="term" value="P:transcription by RNA polymerase I"/>
    <property type="evidence" value="ECO:0007669"/>
    <property type="project" value="TreeGrafter"/>
</dbReference>
<dbReference type="GO" id="GO:0006366">
    <property type="term" value="P:transcription by RNA polymerase II"/>
    <property type="evidence" value="ECO:0007669"/>
    <property type="project" value="TreeGrafter"/>
</dbReference>
<dbReference type="GO" id="GO:0042797">
    <property type="term" value="P:tRNA transcription by RNA polymerase III"/>
    <property type="evidence" value="ECO:0007669"/>
    <property type="project" value="TreeGrafter"/>
</dbReference>
<dbReference type="Gene3D" id="3.90.940.10">
    <property type="match status" value="1"/>
</dbReference>
<dbReference type="HAMAP" id="MF_00192">
    <property type="entry name" value="RNApol_arch_Rpo6"/>
    <property type="match status" value="1"/>
</dbReference>
<dbReference type="InterPro" id="IPR020708">
    <property type="entry name" value="DNA-dir_RNA_polK_14-18kDa_CS"/>
</dbReference>
<dbReference type="InterPro" id="IPR006110">
    <property type="entry name" value="Pol_omega/Rpo6/RPB6"/>
</dbReference>
<dbReference type="InterPro" id="IPR036161">
    <property type="entry name" value="RPB6/omega-like_sf"/>
</dbReference>
<dbReference type="InterPro" id="IPR006111">
    <property type="entry name" value="Rpo6/Rpb6"/>
</dbReference>
<dbReference type="NCBIfam" id="NF002207">
    <property type="entry name" value="PRK01099.1-2"/>
    <property type="match status" value="1"/>
</dbReference>
<dbReference type="NCBIfam" id="NF002208">
    <property type="entry name" value="PRK01099.1-3"/>
    <property type="match status" value="1"/>
</dbReference>
<dbReference type="NCBIfam" id="NF002209">
    <property type="entry name" value="PRK01099.1-4"/>
    <property type="match status" value="1"/>
</dbReference>
<dbReference type="PANTHER" id="PTHR47227">
    <property type="entry name" value="DNA-DIRECTED RNA POLYMERASE SUBUNIT K"/>
    <property type="match status" value="1"/>
</dbReference>
<dbReference type="PANTHER" id="PTHR47227:SF5">
    <property type="entry name" value="DNA-DIRECTED RNA POLYMERASES I, II, AND III SUBUNIT RPABC2"/>
    <property type="match status" value="1"/>
</dbReference>
<dbReference type="Pfam" id="PF01192">
    <property type="entry name" value="RNA_pol_Rpb6"/>
    <property type="match status" value="1"/>
</dbReference>
<dbReference type="SMART" id="SM01409">
    <property type="entry name" value="RNA_pol_Rpb6"/>
    <property type="match status" value="1"/>
</dbReference>
<dbReference type="SUPFAM" id="SSF63562">
    <property type="entry name" value="RPB6/omega subunit-like"/>
    <property type="match status" value="1"/>
</dbReference>
<dbReference type="PROSITE" id="PS01111">
    <property type="entry name" value="RNA_POL_K_14KD"/>
    <property type="match status" value="1"/>
</dbReference>
<keyword id="KW-0963">Cytoplasm</keyword>
<keyword id="KW-0240">DNA-directed RNA polymerase</keyword>
<keyword id="KW-0548">Nucleotidyltransferase</keyword>
<keyword id="KW-0804">Transcription</keyword>
<keyword id="KW-0808">Transferase</keyword>
<feature type="chain" id="PRO_1000204015" description="DNA-directed RNA polymerase subunit Rpo6">
    <location>
        <begin position="1"/>
        <end position="95"/>
    </location>
</feature>
<comment type="function">
    <text evidence="1">DNA-dependent RNA polymerase (RNAP) catalyzes the transcription of DNA into RNA using the four ribonucleoside triphosphates as substrates.</text>
</comment>
<comment type="catalytic activity">
    <reaction evidence="1">
        <text>RNA(n) + a ribonucleoside 5'-triphosphate = RNA(n+1) + diphosphate</text>
        <dbReference type="Rhea" id="RHEA:21248"/>
        <dbReference type="Rhea" id="RHEA-COMP:14527"/>
        <dbReference type="Rhea" id="RHEA-COMP:17342"/>
        <dbReference type="ChEBI" id="CHEBI:33019"/>
        <dbReference type="ChEBI" id="CHEBI:61557"/>
        <dbReference type="ChEBI" id="CHEBI:140395"/>
        <dbReference type="EC" id="2.7.7.6"/>
    </reaction>
</comment>
<comment type="subunit">
    <text evidence="1">Part of the RNA polymerase complex.</text>
</comment>
<comment type="subcellular location">
    <subcellularLocation>
        <location evidence="1">Cytoplasm</location>
    </subcellularLocation>
</comment>
<comment type="similarity">
    <text evidence="1">Belongs to the archaeal Rpo6/eukaryotic RPB6 RNA polymerase subunit family.</text>
</comment>
<protein>
    <recommendedName>
        <fullName evidence="1">DNA-directed RNA polymerase subunit Rpo6</fullName>
        <ecNumber evidence="1">2.7.7.6</ecNumber>
    </recommendedName>
    <alternativeName>
        <fullName evidence="1">DNA-directed RNA polymerase subunit K</fullName>
    </alternativeName>
</protein>
<organism>
    <name type="scientific">Saccharolobus islandicus (strain M.14.25 / Kamchatka #1)</name>
    <name type="common">Sulfolobus islandicus</name>
    <dbReference type="NCBI Taxonomy" id="427317"/>
    <lineage>
        <taxon>Archaea</taxon>
        <taxon>Thermoproteota</taxon>
        <taxon>Thermoprotei</taxon>
        <taxon>Sulfolobales</taxon>
        <taxon>Sulfolobaceae</taxon>
        <taxon>Saccharolobus</taxon>
    </lineage>
</organism>
<evidence type="ECO:0000255" key="1">
    <source>
        <dbReference type="HAMAP-Rule" id="MF_00192"/>
    </source>
</evidence>
<proteinExistence type="inferred from homology"/>
<name>RPO6_SACI4</name>
<reference key="1">
    <citation type="journal article" date="2009" name="Proc. Natl. Acad. Sci. U.S.A.">
        <title>Biogeography of the Sulfolobus islandicus pan-genome.</title>
        <authorList>
            <person name="Reno M.L."/>
            <person name="Held N.L."/>
            <person name="Fields C.J."/>
            <person name="Burke P.V."/>
            <person name="Whitaker R.J."/>
        </authorList>
    </citation>
    <scope>NUCLEOTIDE SEQUENCE [LARGE SCALE GENOMIC DNA]</scope>
    <source>
        <strain>M.14.25 / Kamchatka #1</strain>
    </source>
</reference>